<feature type="chain" id="PRO_0000360379" description="Putative uncharacterized protein ycf15">
    <location>
        <begin position="1"/>
        <end position="45"/>
    </location>
</feature>
<organism>
    <name type="scientific">Citrus sinensis</name>
    <name type="common">Sweet orange</name>
    <name type="synonym">Citrus aurantium var. sinensis</name>
    <dbReference type="NCBI Taxonomy" id="2711"/>
    <lineage>
        <taxon>Eukaryota</taxon>
        <taxon>Viridiplantae</taxon>
        <taxon>Streptophyta</taxon>
        <taxon>Embryophyta</taxon>
        <taxon>Tracheophyta</taxon>
        <taxon>Spermatophyta</taxon>
        <taxon>Magnoliopsida</taxon>
        <taxon>eudicotyledons</taxon>
        <taxon>Gunneridae</taxon>
        <taxon>Pentapetalae</taxon>
        <taxon>rosids</taxon>
        <taxon>malvids</taxon>
        <taxon>Sapindales</taxon>
        <taxon>Rutaceae</taxon>
        <taxon>Aurantioideae</taxon>
        <taxon>Citrus</taxon>
    </lineage>
</organism>
<geneLocation type="chloroplast"/>
<reference key="1">
    <citation type="journal article" date="2006" name="BMC Plant Biol.">
        <title>The complete chloroplast genome sequence of Citrus sinensis (L.) Osbeck var 'Ridge Pineapple': organization and phylogenetic relationships to other angiosperms.</title>
        <authorList>
            <person name="Bausher M.G."/>
            <person name="Singh N.D."/>
            <person name="Lee S.-B."/>
            <person name="Jansen R.K."/>
            <person name="Daniell H."/>
        </authorList>
    </citation>
    <scope>NUCLEOTIDE SEQUENCE [LARGE SCALE GENOMIC DNA]</scope>
    <source>
        <strain>cv. Osbeck var. Ridge Pineapple</strain>
    </source>
</reference>
<proteinExistence type="uncertain"/>
<comment type="subcellular location">
    <subcellularLocation>
        <location>Plastid</location>
        <location>Chloroplast</location>
    </subcellularLocation>
</comment>
<comment type="similarity">
    <text evidence="1">Belongs to the ycf15 family.</text>
</comment>
<comment type="caution">
    <text evidence="1">Could be the product of a pseudogene.</text>
</comment>
<sequence length="45" mass="5504">MLLLKHRRIEILDQNTMYGWYELLKQEFLNSEPPELLLTTSKNFH</sequence>
<evidence type="ECO:0000305" key="1"/>
<name>YCF15_CITSI</name>
<protein>
    <recommendedName>
        <fullName>Putative uncharacterized protein ycf15</fullName>
    </recommendedName>
</protein>
<gene>
    <name type="primary">ycf15-A</name>
</gene>
<gene>
    <name type="primary">ycf15-B</name>
</gene>
<keyword id="KW-0150">Chloroplast</keyword>
<keyword id="KW-0934">Plastid</keyword>
<dbReference type="EMBL" id="DQ864733">
    <property type="protein sequence ID" value="ABI49063.1"/>
    <property type="molecule type" value="Genomic_DNA"/>
</dbReference>
<dbReference type="EMBL" id="DQ864733">
    <property type="protein sequence ID" value="ABI49083.1"/>
    <property type="molecule type" value="Genomic_DNA"/>
</dbReference>
<dbReference type="GO" id="GO:0009507">
    <property type="term" value="C:chloroplast"/>
    <property type="evidence" value="ECO:0007669"/>
    <property type="project" value="UniProtKB-SubCell"/>
</dbReference>
<dbReference type="InterPro" id="IPR019645">
    <property type="entry name" value="Uncharacterised_Ycf15"/>
</dbReference>
<dbReference type="Pfam" id="PF10705">
    <property type="entry name" value="Ycf15"/>
    <property type="match status" value="1"/>
</dbReference>
<accession>Q09MB5</accession>